<keyword id="KW-0007">Acetylation</keyword>
<keyword id="KW-0903">Direct protein sequencing</keyword>
<keyword id="KW-0349">Heme</keyword>
<keyword id="KW-0408">Iron</keyword>
<keyword id="KW-0479">Metal-binding</keyword>
<keyword id="KW-0561">Oxygen transport</keyword>
<keyword id="KW-0597">Phosphoprotein</keyword>
<keyword id="KW-0702">S-nitrosylation</keyword>
<keyword id="KW-0813">Transport</keyword>
<sequence length="147" mass="16114">MVHLTPEEKNAVTTLWGKVNVDEVGGEALGRLLVVYPWTQRFFESFGDLSSPDAVMGNPKVKAHGKKVLGAFSDGLNHLDNLKGTFAQLSELHCDKLHVDPENFKLLGNVLVCVLAHHFGKEFTPQVQAAYQKVVAGVANALAHKYH</sequence>
<gene>
    <name type="primary">HBB</name>
</gene>
<comment type="function">
    <text>Involved in oxygen transport from the lung to the various peripheral tissues.</text>
</comment>
<comment type="subunit">
    <text>Heterotetramer of two alpha chains and two beta chains.</text>
</comment>
<comment type="tissue specificity">
    <text>Red blood cells.</text>
</comment>
<comment type="similarity">
    <text evidence="3">Belongs to the globin family.</text>
</comment>
<accession>P68224</accession>
<accession>P02027</accession>
<accession>Q9TSL4</accession>
<evidence type="ECO:0000250" key="1">
    <source>
        <dbReference type="UniProtKB" id="P02086"/>
    </source>
</evidence>
<evidence type="ECO:0000250" key="2">
    <source>
        <dbReference type="UniProtKB" id="P68871"/>
    </source>
</evidence>
<evidence type="ECO:0000255" key="3">
    <source>
        <dbReference type="PROSITE-ProRule" id="PRU00238"/>
    </source>
</evidence>
<evidence type="ECO:0000269" key="4">
    <source>
    </source>
</evidence>
<reference key="1">
    <citation type="journal article" date="1985" name="Biol. Chem. Hoppe-Seyler">
        <title>Amino-acid sequences of the two major components of adult hemoglobins from the stump-tail monkey, Macaca speciosa.</title>
        <authorList>
            <person name="Maita T."/>
            <person name="Tanioka Y."/>
            <person name="Nakayama S."/>
            <person name="Matsuda G."/>
        </authorList>
    </citation>
    <scope>PROTEIN SEQUENCE OF 2-147</scope>
</reference>
<feature type="initiator methionine" description="Removed" evidence="1 4">
    <location>
        <position position="1"/>
    </location>
</feature>
<feature type="chain" id="PRO_0000053007" description="Hemoglobin subunit beta">
    <location>
        <begin position="2"/>
        <end position="147"/>
    </location>
</feature>
<feature type="domain" description="Globin" evidence="3">
    <location>
        <begin position="3"/>
        <end position="147"/>
    </location>
</feature>
<feature type="binding site" description="distal binding residue">
    <location>
        <position position="64"/>
    </location>
    <ligand>
        <name>heme b</name>
        <dbReference type="ChEBI" id="CHEBI:60344"/>
    </ligand>
    <ligandPart>
        <name>Fe</name>
        <dbReference type="ChEBI" id="CHEBI:18248"/>
    </ligandPart>
</feature>
<feature type="binding site" description="proximal binding residue">
    <location>
        <position position="93"/>
    </location>
    <ligand>
        <name>heme b</name>
        <dbReference type="ChEBI" id="CHEBI:60344"/>
    </ligand>
    <ligandPart>
        <name>Fe</name>
        <dbReference type="ChEBI" id="CHEBI:18248"/>
    </ligandPart>
</feature>
<feature type="modified residue" description="N-acetylvaline" evidence="1">
    <location>
        <position position="2"/>
    </location>
</feature>
<feature type="modified residue" description="Phosphothreonine" evidence="2">
    <location>
        <position position="13"/>
    </location>
</feature>
<feature type="modified residue" description="Phosphoserine" evidence="2">
    <location>
        <position position="45"/>
    </location>
</feature>
<feature type="modified residue" description="N6-acetyllysine" evidence="2">
    <location>
        <position position="60"/>
    </location>
</feature>
<feature type="modified residue" description="N6-acetyllysine" evidence="2">
    <location>
        <position position="83"/>
    </location>
</feature>
<feature type="modified residue" description="S-nitrosocysteine" evidence="2">
    <location>
        <position position="94"/>
    </location>
</feature>
<feature type="modified residue" description="N6-acetyllysine" evidence="2">
    <location>
        <position position="145"/>
    </location>
</feature>
<dbReference type="SMR" id="P68224"/>
<dbReference type="GO" id="GO:0072562">
    <property type="term" value="C:blood microparticle"/>
    <property type="evidence" value="ECO:0007669"/>
    <property type="project" value="TreeGrafter"/>
</dbReference>
<dbReference type="GO" id="GO:0031838">
    <property type="term" value="C:haptoglobin-hemoglobin complex"/>
    <property type="evidence" value="ECO:0007669"/>
    <property type="project" value="TreeGrafter"/>
</dbReference>
<dbReference type="GO" id="GO:0005833">
    <property type="term" value="C:hemoglobin complex"/>
    <property type="evidence" value="ECO:0007669"/>
    <property type="project" value="InterPro"/>
</dbReference>
<dbReference type="GO" id="GO:0031720">
    <property type="term" value="F:haptoglobin binding"/>
    <property type="evidence" value="ECO:0007669"/>
    <property type="project" value="TreeGrafter"/>
</dbReference>
<dbReference type="GO" id="GO:0020037">
    <property type="term" value="F:heme binding"/>
    <property type="evidence" value="ECO:0007669"/>
    <property type="project" value="InterPro"/>
</dbReference>
<dbReference type="GO" id="GO:0031721">
    <property type="term" value="F:hemoglobin alpha binding"/>
    <property type="evidence" value="ECO:0007669"/>
    <property type="project" value="TreeGrafter"/>
</dbReference>
<dbReference type="GO" id="GO:0046872">
    <property type="term" value="F:metal ion binding"/>
    <property type="evidence" value="ECO:0007669"/>
    <property type="project" value="UniProtKB-KW"/>
</dbReference>
<dbReference type="GO" id="GO:0043177">
    <property type="term" value="F:organic acid binding"/>
    <property type="evidence" value="ECO:0007669"/>
    <property type="project" value="TreeGrafter"/>
</dbReference>
<dbReference type="GO" id="GO:0019825">
    <property type="term" value="F:oxygen binding"/>
    <property type="evidence" value="ECO:0007669"/>
    <property type="project" value="InterPro"/>
</dbReference>
<dbReference type="GO" id="GO:0005344">
    <property type="term" value="F:oxygen carrier activity"/>
    <property type="evidence" value="ECO:0007669"/>
    <property type="project" value="UniProtKB-KW"/>
</dbReference>
<dbReference type="GO" id="GO:0004601">
    <property type="term" value="F:peroxidase activity"/>
    <property type="evidence" value="ECO:0007669"/>
    <property type="project" value="TreeGrafter"/>
</dbReference>
<dbReference type="GO" id="GO:0042744">
    <property type="term" value="P:hydrogen peroxide catabolic process"/>
    <property type="evidence" value="ECO:0007669"/>
    <property type="project" value="TreeGrafter"/>
</dbReference>
<dbReference type="CDD" id="cd08925">
    <property type="entry name" value="Hb-beta-like"/>
    <property type="match status" value="1"/>
</dbReference>
<dbReference type="FunFam" id="1.10.490.10:FF:000001">
    <property type="entry name" value="Hemoglobin subunit beta"/>
    <property type="match status" value="1"/>
</dbReference>
<dbReference type="Gene3D" id="1.10.490.10">
    <property type="entry name" value="Globins"/>
    <property type="match status" value="1"/>
</dbReference>
<dbReference type="InterPro" id="IPR000971">
    <property type="entry name" value="Globin"/>
</dbReference>
<dbReference type="InterPro" id="IPR009050">
    <property type="entry name" value="Globin-like_sf"/>
</dbReference>
<dbReference type="InterPro" id="IPR012292">
    <property type="entry name" value="Globin/Proto"/>
</dbReference>
<dbReference type="InterPro" id="IPR002337">
    <property type="entry name" value="Hemoglobin_b"/>
</dbReference>
<dbReference type="InterPro" id="IPR050056">
    <property type="entry name" value="Hemoglobin_oxygen_transport"/>
</dbReference>
<dbReference type="PANTHER" id="PTHR11442">
    <property type="entry name" value="HEMOGLOBIN FAMILY MEMBER"/>
    <property type="match status" value="1"/>
</dbReference>
<dbReference type="PANTHER" id="PTHR11442:SF42">
    <property type="entry name" value="HEMOGLOBIN SUBUNIT BETA"/>
    <property type="match status" value="1"/>
</dbReference>
<dbReference type="Pfam" id="PF00042">
    <property type="entry name" value="Globin"/>
    <property type="match status" value="1"/>
</dbReference>
<dbReference type="PRINTS" id="PR00814">
    <property type="entry name" value="BETAHAEM"/>
</dbReference>
<dbReference type="SUPFAM" id="SSF46458">
    <property type="entry name" value="Globin-like"/>
    <property type="match status" value="1"/>
</dbReference>
<dbReference type="PROSITE" id="PS01033">
    <property type="entry name" value="GLOBIN"/>
    <property type="match status" value="1"/>
</dbReference>
<proteinExistence type="evidence at protein level"/>
<organism>
    <name type="scientific">Macaca speciosa</name>
    <name type="common">Stump-tail macaque</name>
    <dbReference type="NCBI Taxonomy" id="9553"/>
    <lineage>
        <taxon>Eukaryota</taxon>
        <taxon>Metazoa</taxon>
        <taxon>Chordata</taxon>
        <taxon>Craniata</taxon>
        <taxon>Vertebrata</taxon>
        <taxon>Euteleostomi</taxon>
        <taxon>Mammalia</taxon>
        <taxon>Eutheria</taxon>
        <taxon>Euarchontoglires</taxon>
        <taxon>Primates</taxon>
        <taxon>Haplorrhini</taxon>
        <taxon>Catarrhini</taxon>
        <taxon>Cercopithecidae</taxon>
        <taxon>Cercopithecinae</taxon>
        <taxon>Macaca</taxon>
    </lineage>
</organism>
<protein>
    <recommendedName>
        <fullName>Hemoglobin subunit beta</fullName>
    </recommendedName>
    <alternativeName>
        <fullName>Beta-globin</fullName>
    </alternativeName>
    <alternativeName>
        <fullName>Hemoglobin beta chain</fullName>
    </alternativeName>
</protein>
<name>HBB_MACSP</name>